<gene>
    <name evidence="2" type="primary">tuf2</name>
    <name type="ordered locus">YPA_3626</name>
</gene>
<protein>
    <recommendedName>
        <fullName evidence="2">Elongation factor Tu 2</fullName>
        <shortName evidence="2">EF-Tu 2</shortName>
        <ecNumber evidence="2">3.6.5.3</ecNumber>
    </recommendedName>
</protein>
<organism>
    <name type="scientific">Yersinia pestis bv. Antiqua (strain Antiqua)</name>
    <dbReference type="NCBI Taxonomy" id="360102"/>
    <lineage>
        <taxon>Bacteria</taxon>
        <taxon>Pseudomonadati</taxon>
        <taxon>Pseudomonadota</taxon>
        <taxon>Gammaproteobacteria</taxon>
        <taxon>Enterobacterales</taxon>
        <taxon>Yersiniaceae</taxon>
        <taxon>Yersinia</taxon>
    </lineage>
</organism>
<evidence type="ECO:0000250" key="1"/>
<evidence type="ECO:0000255" key="2">
    <source>
        <dbReference type="HAMAP-Rule" id="MF_00118"/>
    </source>
</evidence>
<keyword id="KW-0963">Cytoplasm</keyword>
<keyword id="KW-0251">Elongation factor</keyword>
<keyword id="KW-0342">GTP-binding</keyword>
<keyword id="KW-0378">Hydrolase</keyword>
<keyword id="KW-0460">Magnesium</keyword>
<keyword id="KW-0479">Metal-binding</keyword>
<keyword id="KW-0547">Nucleotide-binding</keyword>
<keyword id="KW-0648">Protein biosynthesis</keyword>
<dbReference type="EC" id="3.6.5.3" evidence="2"/>
<dbReference type="EMBL" id="CP000308">
    <property type="protein sequence ID" value="ABG15588.1"/>
    <property type="molecule type" value="Genomic_DNA"/>
</dbReference>
<dbReference type="SMR" id="Q1C1T4"/>
<dbReference type="KEGG" id="ypa:YPA_3626"/>
<dbReference type="Proteomes" id="UP000001971">
    <property type="component" value="Chromosome"/>
</dbReference>
<dbReference type="GO" id="GO:0005829">
    <property type="term" value="C:cytosol"/>
    <property type="evidence" value="ECO:0007669"/>
    <property type="project" value="TreeGrafter"/>
</dbReference>
<dbReference type="GO" id="GO:0005525">
    <property type="term" value="F:GTP binding"/>
    <property type="evidence" value="ECO:0007669"/>
    <property type="project" value="UniProtKB-UniRule"/>
</dbReference>
<dbReference type="GO" id="GO:0003924">
    <property type="term" value="F:GTPase activity"/>
    <property type="evidence" value="ECO:0007669"/>
    <property type="project" value="InterPro"/>
</dbReference>
<dbReference type="GO" id="GO:0097216">
    <property type="term" value="F:guanosine tetraphosphate binding"/>
    <property type="evidence" value="ECO:0007669"/>
    <property type="project" value="UniProtKB-ARBA"/>
</dbReference>
<dbReference type="GO" id="GO:0003746">
    <property type="term" value="F:translation elongation factor activity"/>
    <property type="evidence" value="ECO:0007669"/>
    <property type="project" value="UniProtKB-UniRule"/>
</dbReference>
<dbReference type="CDD" id="cd01884">
    <property type="entry name" value="EF_Tu"/>
    <property type="match status" value="1"/>
</dbReference>
<dbReference type="CDD" id="cd03697">
    <property type="entry name" value="EFTU_II"/>
    <property type="match status" value="1"/>
</dbReference>
<dbReference type="CDD" id="cd03707">
    <property type="entry name" value="EFTU_III"/>
    <property type="match status" value="1"/>
</dbReference>
<dbReference type="FunFam" id="2.40.30.10:FF:000001">
    <property type="entry name" value="Elongation factor Tu"/>
    <property type="match status" value="1"/>
</dbReference>
<dbReference type="FunFam" id="3.40.50.300:FF:000003">
    <property type="entry name" value="Elongation factor Tu"/>
    <property type="match status" value="1"/>
</dbReference>
<dbReference type="Gene3D" id="3.40.50.300">
    <property type="entry name" value="P-loop containing nucleotide triphosphate hydrolases"/>
    <property type="match status" value="1"/>
</dbReference>
<dbReference type="Gene3D" id="2.40.30.10">
    <property type="entry name" value="Translation factors"/>
    <property type="match status" value="2"/>
</dbReference>
<dbReference type="HAMAP" id="MF_00118_B">
    <property type="entry name" value="EF_Tu_B"/>
    <property type="match status" value="1"/>
</dbReference>
<dbReference type="InterPro" id="IPR041709">
    <property type="entry name" value="EF-Tu_GTP-bd"/>
</dbReference>
<dbReference type="InterPro" id="IPR050055">
    <property type="entry name" value="EF-Tu_GTPase"/>
</dbReference>
<dbReference type="InterPro" id="IPR004161">
    <property type="entry name" value="EFTu-like_2"/>
</dbReference>
<dbReference type="InterPro" id="IPR033720">
    <property type="entry name" value="EFTU_2"/>
</dbReference>
<dbReference type="InterPro" id="IPR031157">
    <property type="entry name" value="G_TR_CS"/>
</dbReference>
<dbReference type="InterPro" id="IPR027417">
    <property type="entry name" value="P-loop_NTPase"/>
</dbReference>
<dbReference type="InterPro" id="IPR005225">
    <property type="entry name" value="Small_GTP-bd"/>
</dbReference>
<dbReference type="InterPro" id="IPR000795">
    <property type="entry name" value="T_Tr_GTP-bd_dom"/>
</dbReference>
<dbReference type="InterPro" id="IPR009000">
    <property type="entry name" value="Transl_B-barrel_sf"/>
</dbReference>
<dbReference type="InterPro" id="IPR009001">
    <property type="entry name" value="Transl_elong_EF1A/Init_IF2_C"/>
</dbReference>
<dbReference type="InterPro" id="IPR004541">
    <property type="entry name" value="Transl_elong_EFTu/EF1A_bac/org"/>
</dbReference>
<dbReference type="InterPro" id="IPR004160">
    <property type="entry name" value="Transl_elong_EFTu/EF1A_C"/>
</dbReference>
<dbReference type="NCBIfam" id="TIGR00485">
    <property type="entry name" value="EF-Tu"/>
    <property type="match status" value="1"/>
</dbReference>
<dbReference type="NCBIfam" id="NF000766">
    <property type="entry name" value="PRK00049.1"/>
    <property type="match status" value="1"/>
</dbReference>
<dbReference type="NCBIfam" id="NF009372">
    <property type="entry name" value="PRK12735.1"/>
    <property type="match status" value="1"/>
</dbReference>
<dbReference type="NCBIfam" id="NF009373">
    <property type="entry name" value="PRK12736.1"/>
    <property type="match status" value="1"/>
</dbReference>
<dbReference type="NCBIfam" id="TIGR00231">
    <property type="entry name" value="small_GTP"/>
    <property type="match status" value="1"/>
</dbReference>
<dbReference type="PANTHER" id="PTHR43721:SF22">
    <property type="entry name" value="ELONGATION FACTOR TU, MITOCHONDRIAL"/>
    <property type="match status" value="1"/>
</dbReference>
<dbReference type="PANTHER" id="PTHR43721">
    <property type="entry name" value="ELONGATION FACTOR TU-RELATED"/>
    <property type="match status" value="1"/>
</dbReference>
<dbReference type="Pfam" id="PF00009">
    <property type="entry name" value="GTP_EFTU"/>
    <property type="match status" value="1"/>
</dbReference>
<dbReference type="Pfam" id="PF03144">
    <property type="entry name" value="GTP_EFTU_D2"/>
    <property type="match status" value="1"/>
</dbReference>
<dbReference type="Pfam" id="PF03143">
    <property type="entry name" value="GTP_EFTU_D3"/>
    <property type="match status" value="1"/>
</dbReference>
<dbReference type="PRINTS" id="PR00315">
    <property type="entry name" value="ELONGATNFCT"/>
</dbReference>
<dbReference type="SUPFAM" id="SSF50465">
    <property type="entry name" value="EF-Tu/eEF-1alpha/eIF2-gamma C-terminal domain"/>
    <property type="match status" value="1"/>
</dbReference>
<dbReference type="SUPFAM" id="SSF52540">
    <property type="entry name" value="P-loop containing nucleoside triphosphate hydrolases"/>
    <property type="match status" value="1"/>
</dbReference>
<dbReference type="SUPFAM" id="SSF50447">
    <property type="entry name" value="Translation proteins"/>
    <property type="match status" value="1"/>
</dbReference>
<dbReference type="PROSITE" id="PS00301">
    <property type="entry name" value="G_TR_1"/>
    <property type="match status" value="1"/>
</dbReference>
<dbReference type="PROSITE" id="PS51722">
    <property type="entry name" value="G_TR_2"/>
    <property type="match status" value="1"/>
</dbReference>
<name>EFTU2_YERPA</name>
<comment type="function">
    <text evidence="2">GTP hydrolase that promotes the GTP-dependent binding of aminoacyl-tRNA to the A-site of ribosomes during protein biosynthesis.</text>
</comment>
<comment type="catalytic activity">
    <reaction evidence="2">
        <text>GTP + H2O = GDP + phosphate + H(+)</text>
        <dbReference type="Rhea" id="RHEA:19669"/>
        <dbReference type="ChEBI" id="CHEBI:15377"/>
        <dbReference type="ChEBI" id="CHEBI:15378"/>
        <dbReference type="ChEBI" id="CHEBI:37565"/>
        <dbReference type="ChEBI" id="CHEBI:43474"/>
        <dbReference type="ChEBI" id="CHEBI:58189"/>
        <dbReference type="EC" id="3.6.5.3"/>
    </reaction>
    <physiologicalReaction direction="left-to-right" evidence="2">
        <dbReference type="Rhea" id="RHEA:19670"/>
    </physiologicalReaction>
</comment>
<comment type="subunit">
    <text evidence="2">Monomer.</text>
</comment>
<comment type="subcellular location">
    <subcellularLocation>
        <location evidence="2">Cytoplasm</location>
    </subcellularLocation>
</comment>
<comment type="similarity">
    <text evidence="2">Belongs to the TRAFAC class translation factor GTPase superfamily. Classic translation factor GTPase family. EF-Tu/EF-1A subfamily.</text>
</comment>
<sequence length="394" mass="43170">MSKEKFERTKPHVNVGTIGHVDHGKTTLTAAITTVLAKTYGGSARAFDQIDNAPEEKARGITINTSHVEYDTPARHYAHVDCPGHADYVKNMITGAAQMDGAILVVAATDGPMPQTREHILLGRQVGVPYIIVFLNKCDMVDDEELLELVEMEVRELLSQYDFPGDDTPVIRGSALKALEGDAEWEAKIIELAEALDSYIPQPERAIDRPFLLPIEDVFSISGRGTVVTGRVERGIVKVGEEVEIVGIIDTIKTTCTGVEMFRKLLDEGRAGENVGVLLRGTKRDDVQRGQVLAKPGSIKPHTKFESEVYILSKDEGGRHTPFFKGYRPQFYFRTTDVTGTIELPEGVEMVMPGDNVNMVVNLIAPIAMDDGLRFAIREGGRTVGAGVVAKVIE</sequence>
<proteinExistence type="inferred from homology"/>
<accession>Q1C1T4</accession>
<feature type="chain" id="PRO_0000337585" description="Elongation factor Tu 2">
    <location>
        <begin position="1"/>
        <end position="394"/>
    </location>
</feature>
<feature type="domain" description="tr-type G">
    <location>
        <begin position="10"/>
        <end position="204"/>
    </location>
</feature>
<feature type="region of interest" description="G1" evidence="1">
    <location>
        <begin position="19"/>
        <end position="26"/>
    </location>
</feature>
<feature type="region of interest" description="G2" evidence="1">
    <location>
        <begin position="60"/>
        <end position="64"/>
    </location>
</feature>
<feature type="region of interest" description="G3" evidence="1">
    <location>
        <begin position="81"/>
        <end position="84"/>
    </location>
</feature>
<feature type="region of interest" description="G4" evidence="1">
    <location>
        <begin position="136"/>
        <end position="139"/>
    </location>
</feature>
<feature type="region of interest" description="G5" evidence="1">
    <location>
        <begin position="174"/>
        <end position="176"/>
    </location>
</feature>
<feature type="binding site" evidence="2">
    <location>
        <begin position="19"/>
        <end position="26"/>
    </location>
    <ligand>
        <name>GTP</name>
        <dbReference type="ChEBI" id="CHEBI:37565"/>
    </ligand>
</feature>
<feature type="binding site" evidence="2">
    <location>
        <position position="26"/>
    </location>
    <ligand>
        <name>Mg(2+)</name>
        <dbReference type="ChEBI" id="CHEBI:18420"/>
    </ligand>
</feature>
<feature type="binding site" evidence="2">
    <location>
        <begin position="81"/>
        <end position="85"/>
    </location>
    <ligand>
        <name>GTP</name>
        <dbReference type="ChEBI" id="CHEBI:37565"/>
    </ligand>
</feature>
<feature type="binding site" evidence="2">
    <location>
        <begin position="136"/>
        <end position="139"/>
    </location>
    <ligand>
        <name>GTP</name>
        <dbReference type="ChEBI" id="CHEBI:37565"/>
    </ligand>
</feature>
<reference key="1">
    <citation type="journal article" date="2006" name="J. Bacteriol.">
        <title>Complete genome sequence of Yersinia pestis strains Antiqua and Nepal516: evidence of gene reduction in an emerging pathogen.</title>
        <authorList>
            <person name="Chain P.S.G."/>
            <person name="Hu P."/>
            <person name="Malfatti S.A."/>
            <person name="Radnedge L."/>
            <person name="Larimer F."/>
            <person name="Vergez L.M."/>
            <person name="Worsham P."/>
            <person name="Chu M.C."/>
            <person name="Andersen G.L."/>
        </authorList>
    </citation>
    <scope>NUCLEOTIDE SEQUENCE [LARGE SCALE GENOMIC DNA]</scope>
    <source>
        <strain>Antiqua</strain>
    </source>
</reference>